<protein>
    <recommendedName>
        <fullName>4-sulfomuconolactone hydrolase</fullName>
        <ecNumber>3.1.1.92</ecNumber>
    </recommendedName>
    <alternativeName>
        <fullName>4-carboxymethylen-4-sulfo-but-2-en-olide hydrolases</fullName>
    </alternativeName>
</protein>
<accession>A6XIG7</accession>
<proteinExistence type="evidence at protein level"/>
<sequence>MLPADQAGIPPCQGPRARSAPISFAIPKGAWDTHLHVFGPTAVFPYAEKRPYTPPDSPLEDYLALMERLGIERGVCVHPNVHGIDNSVTIDAVERSDRRLLGIIKPHRVMTFTELRDLKTRGVRGVRFAFNPQHGSGALDTELFERMHGWCRELDWCINMHFAPDALEGLCDLIAGAETPIIIDHFGRVETAAGVNQLPFKILRDLATLDHVWIKLTGADRISHSGVPYDDVVPFAHALSEIAPDRLLWGSDWPHSGYFDPKRMPDDGDLLNLVARFAPDVALRHKILVDNPARLFGVI</sequence>
<organism>
    <name type="scientific">Rhizobium radiobacter</name>
    <name type="common">Agrobacterium tumefaciens</name>
    <name type="synonym">Agrobacterium radiobacter</name>
    <dbReference type="NCBI Taxonomy" id="358"/>
    <lineage>
        <taxon>Bacteria</taxon>
        <taxon>Pseudomonadati</taxon>
        <taxon>Pseudomonadota</taxon>
        <taxon>Alphaproteobacteria</taxon>
        <taxon>Hyphomicrobiales</taxon>
        <taxon>Rhizobiaceae</taxon>
        <taxon>Rhizobium/Agrobacterium group</taxon>
        <taxon>Agrobacterium</taxon>
        <taxon>Agrobacterium tumefaciens complex</taxon>
    </lineage>
</organism>
<reference key="1">
    <citation type="journal article" date="2007" name="J. Bacteriol.">
        <title>4-sulfomuconolactone hydrolases from Hydrogenophaga intermedia S1 and Agrobacterium radiobacter S2.</title>
        <authorList>
            <person name="Halak S."/>
            <person name="Basta T."/>
            <person name="Burger S."/>
            <person name="Contzen M."/>
            <person name="Wray V."/>
            <person name="Pieper D.H."/>
            <person name="Stolz A."/>
        </authorList>
    </citation>
    <scope>NUCLEOTIDE SEQUENCE [GENOMIC DNA]</scope>
    <scope>FUNCTION</scope>
    <scope>CATALYTIC ACTIVITY</scope>
    <scope>BIOPHYSICOCHEMICAL PROPERTIES</scope>
    <scope>SUBUNIT</scope>
    <source>
        <strain>S2</strain>
    </source>
</reference>
<comment type="function">
    <text evidence="2">Involved in the degradation of 4-sulfocatechol which is a central intermediate in the degradation of substituted sulfonated benzenes. Catalyzes the hydrolytical desulfonation of 4-sulfomuconolactone to yield maleylacetate.</text>
</comment>
<comment type="catalytic activity">
    <reaction evidence="2">
        <text>4-sulfomuconolactone + H2O = maleylacetate + sulfite + 2 H(+)</text>
        <dbReference type="Rhea" id="RHEA:33711"/>
        <dbReference type="ChEBI" id="CHEBI:15377"/>
        <dbReference type="ChEBI" id="CHEBI:15378"/>
        <dbReference type="ChEBI" id="CHEBI:16468"/>
        <dbReference type="ChEBI" id="CHEBI:17359"/>
        <dbReference type="ChEBI" id="CHEBI:20479"/>
        <dbReference type="EC" id="3.1.1.92"/>
    </reaction>
</comment>
<comment type="cofactor">
    <cofactor evidence="1">
        <name>Zn(2+)</name>
        <dbReference type="ChEBI" id="CHEBI:29105"/>
    </cofactor>
</comment>
<comment type="biophysicochemical properties">
    <kinetics>
        <KM evidence="2">0.34 mM for 4-sulfomuconolactone (at pH 8)</KM>
        <Vmax evidence="2">12.6 umol/min/mg enzyme (at pH 8)</Vmax>
        <text>kcat is 400 min(-1) with 4-sulfomuconolactone (at pH 8).</text>
    </kinetics>
    <phDependence>
        <text evidence="2">Optimum pH is between 7 and 7.5. Approximately 30% of the maximal activities are still detected at pH 5 and pH 9.</text>
    </phDependence>
</comment>
<comment type="subunit">
    <text evidence="2">Monomer.</text>
</comment>
<comment type="similarity">
    <text evidence="3">Belongs to the metallo-dependent hydrolases superfamily. Sulfomuconolactone hydrolase family.</text>
</comment>
<evidence type="ECO:0000250" key="1"/>
<evidence type="ECO:0000269" key="2">
    <source>
    </source>
</evidence>
<evidence type="ECO:0000305" key="3"/>
<name>SLMH_RHIRD</name>
<dbReference type="EC" id="3.1.1.92"/>
<dbReference type="EMBL" id="DQ813262">
    <property type="protein sequence ID" value="ABH09755.1"/>
    <property type="molecule type" value="Genomic_DNA"/>
</dbReference>
<dbReference type="SMR" id="A6XIG7"/>
<dbReference type="KEGG" id="ag:ABH09755"/>
<dbReference type="BRENDA" id="3.1.1.92">
    <property type="organism ID" value="200"/>
</dbReference>
<dbReference type="GO" id="GO:0102998">
    <property type="term" value="F:4-sulfomuconolactone hydrolase activity"/>
    <property type="evidence" value="ECO:0000314"/>
    <property type="project" value="UniProtKB"/>
</dbReference>
<dbReference type="Gene3D" id="3.20.20.140">
    <property type="entry name" value="Metal-dependent hydrolases"/>
    <property type="match status" value="1"/>
</dbReference>
<dbReference type="InterPro" id="IPR006680">
    <property type="entry name" value="Amidohydro-rel"/>
</dbReference>
<dbReference type="InterPro" id="IPR052358">
    <property type="entry name" value="Aro_Compnd_Degr_Hydrolases"/>
</dbReference>
<dbReference type="InterPro" id="IPR032466">
    <property type="entry name" value="Metal_Hydrolase"/>
</dbReference>
<dbReference type="InterPro" id="IPR053519">
    <property type="entry name" value="SML-Hydrolase"/>
</dbReference>
<dbReference type="NCBIfam" id="NF042924">
    <property type="entry name" value="SlmHylase"/>
    <property type="match status" value="1"/>
</dbReference>
<dbReference type="PANTHER" id="PTHR35563">
    <property type="entry name" value="BARREL METAL-DEPENDENT HYDROLASE, PUTATIVE (AFU_ORTHOLOGUE AFUA_1G16240)-RELATED"/>
    <property type="match status" value="1"/>
</dbReference>
<dbReference type="PANTHER" id="PTHR35563:SF2">
    <property type="entry name" value="BARREL METAL-DEPENDENT HYDROLASE, PUTATIVE (AFU_ORTHOLOGUE AFUA_1G16240)-RELATED"/>
    <property type="match status" value="1"/>
</dbReference>
<dbReference type="Pfam" id="PF04909">
    <property type="entry name" value="Amidohydro_2"/>
    <property type="match status" value="1"/>
</dbReference>
<dbReference type="SUPFAM" id="SSF51556">
    <property type="entry name" value="Metallo-dependent hydrolases"/>
    <property type="match status" value="1"/>
</dbReference>
<feature type="chain" id="PRO_0000422785" description="4-sulfomuconolactone hydrolase">
    <location>
        <begin position="1"/>
        <end position="299"/>
    </location>
</feature>
<keyword id="KW-0378">Hydrolase</keyword>